<sequence length="340" mass="37276">MGPVMLDVVGHELDAEEREILDHPLVGGVILFSRNFDDPAQLRELVRQIRQAARHPLLVTVDQEGGRVQRFHQGFTRLPAAQSYAALNTPQEAQRLALEGGWLMACEMIAMDIDLSFAPVLDLGHGSAAIGERAFHREAESAIPLAQAFIDGMHQAGMKATGKHFPGHGKVSADSHKETPIDARPLVQIVEHDMVIFRTLNACGKLDAVMPAHVIYSQADSRPASGSPYWLQQVLRQTLGFEGVVFSDDLSMNGAAVMGSYAQRAQASLDAGCDMVLVCNNRQGAISVLDHLSAAGSPRIARLRHRGQVDREGLMGSARWKQAHQDLQRLHQRWEEAKQA</sequence>
<keyword id="KW-0131">Cell cycle</keyword>
<keyword id="KW-0132">Cell division</keyword>
<keyword id="KW-0133">Cell shape</keyword>
<keyword id="KW-0961">Cell wall biogenesis/degradation</keyword>
<keyword id="KW-0963">Cytoplasm</keyword>
<keyword id="KW-0326">Glycosidase</keyword>
<keyword id="KW-0378">Hydrolase</keyword>
<keyword id="KW-0573">Peptidoglycan synthesis</keyword>
<protein>
    <recommendedName>
        <fullName evidence="1">Beta-hexosaminidase</fullName>
        <ecNumber evidence="1">3.2.1.52</ecNumber>
    </recommendedName>
    <alternativeName>
        <fullName evidence="1">Beta-N-acetylhexosaminidase</fullName>
    </alternativeName>
    <alternativeName>
        <fullName evidence="1">N-acetyl-beta-glucosaminidase</fullName>
    </alternativeName>
</protein>
<evidence type="ECO:0000255" key="1">
    <source>
        <dbReference type="HAMAP-Rule" id="MF_00364"/>
    </source>
</evidence>
<reference key="1">
    <citation type="submission" date="2009-03" db="EMBL/GenBank/DDBJ databases">
        <title>Complete genome sequence of Edwardsiella ictaluri 93-146.</title>
        <authorList>
            <person name="Williams M.L."/>
            <person name="Gillaspy A.F."/>
            <person name="Dyer D.W."/>
            <person name="Thune R.L."/>
            <person name="Waldbieser G.C."/>
            <person name="Schuster S.C."/>
            <person name="Gipson J."/>
            <person name="Zaitshik J."/>
            <person name="Landry C."/>
            <person name="Lawrence M.L."/>
        </authorList>
    </citation>
    <scope>NUCLEOTIDE SEQUENCE [LARGE SCALE GENOMIC DNA]</scope>
    <source>
        <strain>93-146</strain>
    </source>
</reference>
<accession>C5BFM6</accession>
<name>NAGZ_EDWI9</name>
<comment type="function">
    <text evidence="1">Plays a role in peptidoglycan recycling by cleaving the terminal beta-1,4-linked N-acetylglucosamine (GlcNAc) from peptide-linked peptidoglycan fragments, giving rise to free GlcNAc, anhydro-N-acetylmuramic acid and anhydro-N-acetylmuramic acid-linked peptides.</text>
</comment>
<comment type="catalytic activity">
    <reaction evidence="1">
        <text>Hydrolysis of terminal non-reducing N-acetyl-D-hexosamine residues in N-acetyl-beta-D-hexosaminides.</text>
        <dbReference type="EC" id="3.2.1.52"/>
    </reaction>
</comment>
<comment type="pathway">
    <text evidence="1">Cell wall biogenesis; peptidoglycan recycling.</text>
</comment>
<comment type="subcellular location">
    <subcellularLocation>
        <location evidence="1">Cytoplasm</location>
    </subcellularLocation>
</comment>
<comment type="similarity">
    <text evidence="1">Belongs to the glycosyl hydrolase 3 family. NagZ subfamily.</text>
</comment>
<dbReference type="EC" id="3.2.1.52" evidence="1"/>
<dbReference type="EMBL" id="CP001600">
    <property type="protein sequence ID" value="ACR68989.1"/>
    <property type="molecule type" value="Genomic_DNA"/>
</dbReference>
<dbReference type="RefSeq" id="WP_015871136.1">
    <property type="nucleotide sequence ID" value="NZ_CP169062.1"/>
</dbReference>
<dbReference type="SMR" id="C5BFM6"/>
<dbReference type="STRING" id="67780.B6E78_02150"/>
<dbReference type="CAZy" id="GH3">
    <property type="family name" value="Glycoside Hydrolase Family 3"/>
</dbReference>
<dbReference type="GeneID" id="69538770"/>
<dbReference type="KEGG" id="eic:NT01EI_1812"/>
<dbReference type="PATRIC" id="fig|634503.3.peg.1625"/>
<dbReference type="HOGENOM" id="CLU_008392_0_0_6"/>
<dbReference type="OrthoDB" id="9786661at2"/>
<dbReference type="UniPathway" id="UPA00544"/>
<dbReference type="Proteomes" id="UP000001485">
    <property type="component" value="Chromosome"/>
</dbReference>
<dbReference type="GO" id="GO:0005737">
    <property type="term" value="C:cytoplasm"/>
    <property type="evidence" value="ECO:0007669"/>
    <property type="project" value="UniProtKB-SubCell"/>
</dbReference>
<dbReference type="GO" id="GO:0004563">
    <property type="term" value="F:beta-N-acetylhexosaminidase activity"/>
    <property type="evidence" value="ECO:0007669"/>
    <property type="project" value="UniProtKB-UniRule"/>
</dbReference>
<dbReference type="GO" id="GO:0005975">
    <property type="term" value="P:carbohydrate metabolic process"/>
    <property type="evidence" value="ECO:0007669"/>
    <property type="project" value="InterPro"/>
</dbReference>
<dbReference type="GO" id="GO:0051301">
    <property type="term" value="P:cell division"/>
    <property type="evidence" value="ECO:0007669"/>
    <property type="project" value="UniProtKB-KW"/>
</dbReference>
<dbReference type="GO" id="GO:0071555">
    <property type="term" value="P:cell wall organization"/>
    <property type="evidence" value="ECO:0007669"/>
    <property type="project" value="UniProtKB-KW"/>
</dbReference>
<dbReference type="GO" id="GO:0009252">
    <property type="term" value="P:peptidoglycan biosynthetic process"/>
    <property type="evidence" value="ECO:0007669"/>
    <property type="project" value="UniProtKB-KW"/>
</dbReference>
<dbReference type="GO" id="GO:0009254">
    <property type="term" value="P:peptidoglycan turnover"/>
    <property type="evidence" value="ECO:0007669"/>
    <property type="project" value="UniProtKB-UniRule"/>
</dbReference>
<dbReference type="GO" id="GO:0008360">
    <property type="term" value="P:regulation of cell shape"/>
    <property type="evidence" value="ECO:0007669"/>
    <property type="project" value="UniProtKB-KW"/>
</dbReference>
<dbReference type="FunFam" id="3.20.20.300:FF:000001">
    <property type="entry name" value="Beta-hexosaminidase"/>
    <property type="match status" value="1"/>
</dbReference>
<dbReference type="Gene3D" id="3.20.20.300">
    <property type="entry name" value="Glycoside hydrolase, family 3, N-terminal domain"/>
    <property type="match status" value="1"/>
</dbReference>
<dbReference type="HAMAP" id="MF_00364">
    <property type="entry name" value="NagZ"/>
    <property type="match status" value="1"/>
</dbReference>
<dbReference type="InterPro" id="IPR022956">
    <property type="entry name" value="Beta_hexosaminidase_bac"/>
</dbReference>
<dbReference type="InterPro" id="IPR001764">
    <property type="entry name" value="Glyco_hydro_3_N"/>
</dbReference>
<dbReference type="InterPro" id="IPR036962">
    <property type="entry name" value="Glyco_hydro_3_N_sf"/>
</dbReference>
<dbReference type="InterPro" id="IPR017853">
    <property type="entry name" value="Glycoside_hydrolase_SF"/>
</dbReference>
<dbReference type="InterPro" id="IPR050226">
    <property type="entry name" value="NagZ_Beta-hexosaminidase"/>
</dbReference>
<dbReference type="NCBIfam" id="NF003740">
    <property type="entry name" value="PRK05337.1"/>
    <property type="match status" value="1"/>
</dbReference>
<dbReference type="PANTHER" id="PTHR30480:SF13">
    <property type="entry name" value="BETA-HEXOSAMINIDASE"/>
    <property type="match status" value="1"/>
</dbReference>
<dbReference type="PANTHER" id="PTHR30480">
    <property type="entry name" value="BETA-HEXOSAMINIDASE-RELATED"/>
    <property type="match status" value="1"/>
</dbReference>
<dbReference type="Pfam" id="PF00933">
    <property type="entry name" value="Glyco_hydro_3"/>
    <property type="match status" value="1"/>
</dbReference>
<dbReference type="SUPFAM" id="SSF51445">
    <property type="entry name" value="(Trans)glycosidases"/>
    <property type="match status" value="1"/>
</dbReference>
<proteinExistence type="inferred from homology"/>
<gene>
    <name evidence="1" type="primary">nagZ</name>
    <name type="ordered locus">NT01EI_1812</name>
</gene>
<feature type="chain" id="PRO_1000205460" description="Beta-hexosaminidase">
    <location>
        <begin position="1"/>
        <end position="340"/>
    </location>
</feature>
<feature type="active site" description="Proton donor/acceptor" evidence="1">
    <location>
        <position position="176"/>
    </location>
</feature>
<feature type="active site" description="Nucleophile" evidence="1">
    <location>
        <position position="248"/>
    </location>
</feature>
<feature type="binding site" evidence="1">
    <location>
        <position position="62"/>
    </location>
    <ligand>
        <name>substrate</name>
    </ligand>
</feature>
<feature type="binding site" evidence="1">
    <location>
        <position position="70"/>
    </location>
    <ligand>
        <name>substrate</name>
    </ligand>
</feature>
<feature type="binding site" evidence="1">
    <location>
        <position position="133"/>
    </location>
    <ligand>
        <name>substrate</name>
    </ligand>
</feature>
<feature type="binding site" evidence="1">
    <location>
        <begin position="163"/>
        <end position="164"/>
    </location>
    <ligand>
        <name>substrate</name>
    </ligand>
</feature>
<feature type="site" description="Important for catalytic activity" evidence="1">
    <location>
        <position position="174"/>
    </location>
</feature>
<organism>
    <name type="scientific">Edwardsiella ictaluri (strain 93-146)</name>
    <dbReference type="NCBI Taxonomy" id="634503"/>
    <lineage>
        <taxon>Bacteria</taxon>
        <taxon>Pseudomonadati</taxon>
        <taxon>Pseudomonadota</taxon>
        <taxon>Gammaproteobacteria</taxon>
        <taxon>Enterobacterales</taxon>
        <taxon>Hafniaceae</taxon>
        <taxon>Edwardsiella</taxon>
    </lineage>
</organism>